<accession>P85098</accession>
<reference key="1">
    <citation type="submission" date="2007-02" db="UniProtKB">
        <title>Identification of membrane-bound respiratory nitrate reductase from Bradyrhizobium sp. (Lupinus) USDA 3045 by tandem mass spectrometry.</title>
        <authorList>
            <person name="Polcyn W."/>
        </authorList>
    </citation>
    <scope>PROTEIN SEQUENCE</scope>
    <scope>FUNCTION</scope>
    <scope>ACTIVITY REGULATION</scope>
    <scope>SUBUNIT</scope>
    <scope>SUBCELLULAR LOCATION</scope>
    <scope>INDUCTION</scope>
    <source>
        <strain evidence="3">USDA 3045</strain>
    </source>
</reference>
<name>NARH_BRASZ</name>
<evidence type="ECO:0000250" key="1">
    <source>
        <dbReference type="UniProtKB" id="P11349"/>
    </source>
</evidence>
<evidence type="ECO:0000255" key="2">
    <source>
        <dbReference type="PROSITE-ProRule" id="PRU00711"/>
    </source>
</evidence>
<evidence type="ECO:0000269" key="3">
    <source ref="1"/>
</evidence>
<evidence type="ECO:0000303" key="4">
    <source ref="1"/>
</evidence>
<sequence length="266" mass="29401">SQVGMVLNLDKCIGCHTCSVTCKEGMEYAWFNNVESKLCEHCLNPACVATCPSGAIYKREEDGIVLIDQDKLCISGCPYKCIFCYPRIESGQPTVCSETCVGRYLGVLLYDADRIEEAASTEHETDLLYERQLDVFLDPNDPKVIEQAIKQGIPQNVIDAAQRSPVYKLALPLHPEYRAADAGELGSNGILPDVESLRMLSAGDTGPVIRSQTVEGVTDTRALEEVGLTEAQAQEMYRYLAIANYEDRFVVPSSHRIDAINITEVR</sequence>
<keyword id="KW-0003">3Fe-4S</keyword>
<keyword id="KW-0004">4Fe-4S</keyword>
<keyword id="KW-1003">Cell membrane</keyword>
<keyword id="KW-0963">Cytoplasm</keyword>
<keyword id="KW-0903">Direct protein sequencing</keyword>
<keyword id="KW-0249">Electron transport</keyword>
<keyword id="KW-0408">Iron</keyword>
<keyword id="KW-0411">Iron-sulfur</keyword>
<keyword id="KW-0472">Membrane</keyword>
<keyword id="KW-0479">Metal-binding</keyword>
<keyword id="KW-0534">Nitrate assimilation</keyword>
<keyword id="KW-0560">Oxidoreductase</keyword>
<keyword id="KW-0677">Repeat</keyword>
<keyword id="KW-0813">Transport</keyword>
<comment type="function">
    <text evidence="1 3">The nitrate reductase enzyme complex allows Bradyrhizobium sp. USDA 3045 to use nitrate as an electron acceptor during anaerobic growth. The beta chain is an electron transfer unit containing four cysteine clusters involved in the formation of iron-sulfur centers. Electrons are transferred from the gamma chain to the molybdenum cofactor of the alpha subunit.</text>
</comment>
<comment type="catalytic activity">
    <reaction>
        <text>nitrate + a quinol = a quinone + nitrite + H2O</text>
        <dbReference type="Rhea" id="RHEA:56144"/>
        <dbReference type="ChEBI" id="CHEBI:15377"/>
        <dbReference type="ChEBI" id="CHEBI:16301"/>
        <dbReference type="ChEBI" id="CHEBI:17632"/>
        <dbReference type="ChEBI" id="CHEBI:24646"/>
        <dbReference type="ChEBI" id="CHEBI:132124"/>
        <dbReference type="EC" id="1.7.5.1"/>
    </reaction>
</comment>
<comment type="cofactor">
    <cofactor evidence="1">
        <name>[4Fe-4S] cluster</name>
        <dbReference type="ChEBI" id="CHEBI:49883"/>
    </cofactor>
    <text evidence="1">Binds 3 [4Fe-4S] clusters per subunit.</text>
</comment>
<comment type="cofactor">
    <cofactor evidence="1">
        <name>[3Fe-4S] cluster</name>
        <dbReference type="ChEBI" id="CHEBI:21137"/>
    </cofactor>
    <text evidence="1">Binds 1 [3Fe-4S] cluster per subunit.</text>
</comment>
<comment type="activity regulation">
    <text evidence="3">Inhibited by micromolar concentrations of azide.</text>
</comment>
<comment type="subunit">
    <text evidence="3">Heterotrimer composed of an alpha, a beta and a gamma chain. Alpha and beta are catalytic chains; gamma chains are involved in binding the enzyme complex to the cytoplasmic membrane.</text>
</comment>
<comment type="subcellular location">
    <subcellularLocation>
        <location evidence="3">Cell membrane</location>
    </subcellularLocation>
    <subcellularLocation>
        <location evidence="3">Cytoplasm</location>
    </subcellularLocation>
</comment>
<comment type="induction">
    <text evidence="3">Induced by anaerobiosis, there is no significant expression in an aerobic environment. Expression is further induced in the presence of nitrate or nitrite.</text>
</comment>
<dbReference type="EC" id="1.7.5.1"/>
<dbReference type="SMR" id="P85098"/>
<dbReference type="GO" id="GO:0005737">
    <property type="term" value="C:cytoplasm"/>
    <property type="evidence" value="ECO:0007669"/>
    <property type="project" value="UniProtKB-SubCell"/>
</dbReference>
<dbReference type="GO" id="GO:0005886">
    <property type="term" value="C:plasma membrane"/>
    <property type="evidence" value="ECO:0007669"/>
    <property type="project" value="UniProtKB-SubCell"/>
</dbReference>
<dbReference type="GO" id="GO:0051538">
    <property type="term" value="F:3 iron, 4 sulfur cluster binding"/>
    <property type="evidence" value="ECO:0007669"/>
    <property type="project" value="UniProtKB-KW"/>
</dbReference>
<dbReference type="GO" id="GO:0051539">
    <property type="term" value="F:4 iron, 4 sulfur cluster binding"/>
    <property type="evidence" value="ECO:0007669"/>
    <property type="project" value="UniProtKB-KW"/>
</dbReference>
<dbReference type="GO" id="GO:0009055">
    <property type="term" value="F:electron transfer activity"/>
    <property type="evidence" value="ECO:0007669"/>
    <property type="project" value="TreeGrafter"/>
</dbReference>
<dbReference type="GO" id="GO:0046872">
    <property type="term" value="F:metal ion binding"/>
    <property type="evidence" value="ECO:0007669"/>
    <property type="project" value="UniProtKB-KW"/>
</dbReference>
<dbReference type="GO" id="GO:0160182">
    <property type="term" value="F:nitrate reductase (quinone) activity"/>
    <property type="evidence" value="ECO:0007669"/>
    <property type="project" value="UniProtKB-EC"/>
</dbReference>
<dbReference type="GO" id="GO:0009061">
    <property type="term" value="P:anaerobic respiration"/>
    <property type="evidence" value="ECO:0007669"/>
    <property type="project" value="TreeGrafter"/>
</dbReference>
<dbReference type="GO" id="GO:0042128">
    <property type="term" value="P:nitrate assimilation"/>
    <property type="evidence" value="ECO:0007669"/>
    <property type="project" value="UniProtKB-KW"/>
</dbReference>
<dbReference type="Gene3D" id="3.30.70.20">
    <property type="match status" value="3"/>
</dbReference>
<dbReference type="InterPro" id="IPR017896">
    <property type="entry name" value="4Fe4S_Fe-S-bd"/>
</dbReference>
<dbReference type="PANTHER" id="PTHR43518">
    <property type="entry name" value="NITRATE REDUCTASE BETA SUBUNIT"/>
    <property type="match status" value="1"/>
</dbReference>
<dbReference type="PANTHER" id="PTHR43518:SF1">
    <property type="entry name" value="RESPIRATORY NITRATE REDUCTASE 1 BETA CHAIN"/>
    <property type="match status" value="1"/>
</dbReference>
<dbReference type="Pfam" id="PF13247">
    <property type="entry name" value="Fer4_11"/>
    <property type="match status" value="1"/>
</dbReference>
<dbReference type="SUPFAM" id="SSF54862">
    <property type="entry name" value="4Fe-4S ferredoxins"/>
    <property type="match status" value="1"/>
</dbReference>
<dbReference type="PROSITE" id="PS51379">
    <property type="entry name" value="4FE4S_FER_2"/>
    <property type="match status" value="2"/>
</dbReference>
<feature type="chain" id="PRO_0000283779" description="Respiratory nitrate reductase beta chain">
    <location>
        <begin position="1"/>
        <end position="266" status="greater than"/>
    </location>
</feature>
<feature type="domain" description="4Fe-4S ferredoxin-type 1" evidence="2">
    <location>
        <begin position="3"/>
        <end position="32"/>
    </location>
</feature>
<feature type="domain" description="4Fe-4S ferredoxin-type 2" evidence="2">
    <location>
        <begin position="30"/>
        <end position="61"/>
    </location>
</feature>
<feature type="binding site" evidence="1">
    <location>
        <position position="12"/>
    </location>
    <ligand>
        <name>[4Fe-4S] cluster</name>
        <dbReference type="ChEBI" id="CHEBI:49883"/>
        <label>1</label>
    </ligand>
</feature>
<feature type="binding site" evidence="1">
    <location>
        <position position="15"/>
    </location>
    <ligand>
        <name>[4Fe-4S] cluster</name>
        <dbReference type="ChEBI" id="CHEBI:49883"/>
        <label>1</label>
    </ligand>
</feature>
<feature type="binding site" evidence="1">
    <location>
        <position position="18"/>
    </location>
    <ligand>
        <name>[4Fe-4S] cluster</name>
        <dbReference type="ChEBI" id="CHEBI:49883"/>
        <label>1</label>
    </ligand>
</feature>
<feature type="binding site" evidence="1">
    <location>
        <position position="22"/>
    </location>
    <ligand>
        <name>[4Fe-4S] cluster</name>
        <dbReference type="ChEBI" id="CHEBI:49883"/>
        <label>2</label>
    </ligand>
</feature>
<feature type="binding site" evidence="1">
    <location>
        <position position="39"/>
    </location>
    <ligand>
        <name>[4Fe-4S] cluster</name>
        <dbReference type="ChEBI" id="CHEBI:49883"/>
        <label>3</label>
    </ligand>
</feature>
<feature type="binding site" evidence="1">
    <location>
        <position position="42"/>
    </location>
    <ligand>
        <name>[4Fe-4S] cluster</name>
        <dbReference type="ChEBI" id="CHEBI:49883"/>
        <label>3</label>
    </ligand>
</feature>
<feature type="binding site" evidence="1">
    <location>
        <position position="47"/>
    </location>
    <ligand>
        <name>[4Fe-4S] cluster</name>
        <dbReference type="ChEBI" id="CHEBI:49883"/>
        <label>3</label>
    </ligand>
</feature>
<feature type="binding site" evidence="1">
    <location>
        <position position="51"/>
    </location>
    <ligand>
        <name>[3Fe-4S] cluster</name>
        <dbReference type="ChEBI" id="CHEBI:21137"/>
    </ligand>
</feature>
<feature type="binding site" evidence="1">
    <location>
        <position position="73"/>
    </location>
    <ligand>
        <name>[3Fe-4S] cluster</name>
        <dbReference type="ChEBI" id="CHEBI:21137"/>
    </ligand>
</feature>
<feature type="binding site" evidence="1">
    <location>
        <position position="77"/>
    </location>
    <ligand>
        <name>[4Fe-4S] cluster</name>
        <dbReference type="ChEBI" id="CHEBI:49883"/>
        <label>3</label>
    </ligand>
</feature>
<feature type="binding site" evidence="1">
    <location>
        <position position="81"/>
    </location>
    <ligand>
        <name>[4Fe-4S] cluster</name>
        <dbReference type="ChEBI" id="CHEBI:49883"/>
        <label>2</label>
    </ligand>
</feature>
<feature type="binding site" evidence="1">
    <location>
        <position position="84"/>
    </location>
    <ligand>
        <name>[4Fe-4S] cluster</name>
        <dbReference type="ChEBI" id="CHEBI:49883"/>
        <label>2</label>
    </ligand>
</feature>
<feature type="binding site" evidence="1">
    <location>
        <position position="96"/>
    </location>
    <ligand>
        <name>[4Fe-4S] cluster</name>
        <dbReference type="ChEBI" id="CHEBI:49883"/>
        <label>2</label>
    </ligand>
</feature>
<feature type="binding site" evidence="1">
    <location>
        <position position="100"/>
    </location>
    <ligand>
        <name>[4Fe-4S] cluster</name>
        <dbReference type="ChEBI" id="CHEBI:49883"/>
        <label>1</label>
    </ligand>
</feature>
<feature type="non-consecutive residues" evidence="4">
    <location>
        <begin position="11"/>
        <end position="12"/>
    </location>
</feature>
<feature type="non-consecutive residues" evidence="4">
    <location>
        <begin position="23"/>
        <end position="24"/>
    </location>
</feature>
<feature type="non-consecutive residues" evidence="4">
    <location>
        <begin position="37"/>
        <end position="38"/>
    </location>
</feature>
<feature type="non-consecutive residues" evidence="4">
    <location>
        <begin position="58"/>
        <end position="59"/>
    </location>
</feature>
<feature type="non-consecutive residues" evidence="4">
    <location>
        <begin position="71"/>
        <end position="72"/>
    </location>
</feature>
<feature type="non-consecutive residues" evidence="4">
    <location>
        <begin position="80"/>
        <end position="81"/>
    </location>
</feature>
<feature type="non-consecutive residues" evidence="4">
    <location>
        <begin position="87"/>
        <end position="88"/>
    </location>
</feature>
<feature type="non-consecutive residues" evidence="4">
    <location>
        <begin position="103"/>
        <end position="104"/>
    </location>
</feature>
<feature type="non-consecutive residues" evidence="4">
    <location>
        <begin position="114"/>
        <end position="115"/>
    </location>
</feature>
<feature type="non-consecutive residues" evidence="4">
    <location>
        <begin position="131"/>
        <end position="132"/>
    </location>
</feature>
<feature type="non-consecutive residues" evidence="4">
    <location>
        <begin position="143"/>
        <end position="144"/>
    </location>
</feature>
<feature type="non-consecutive residues" evidence="4">
    <location>
        <begin position="150"/>
        <end position="151"/>
    </location>
</feature>
<feature type="non-consecutive residues" evidence="4">
    <location>
        <begin position="163"/>
        <end position="164"/>
    </location>
</feature>
<feature type="non-consecutive residues" evidence="4">
    <location>
        <begin position="168"/>
        <end position="169"/>
    </location>
</feature>
<feature type="non-consecutive residues" evidence="4">
    <location>
        <begin position="178"/>
        <end position="179"/>
    </location>
</feature>
<feature type="non-consecutive residues" evidence="4">
    <location>
        <begin position="198"/>
        <end position="199"/>
    </location>
</feature>
<feature type="non-consecutive residues" evidence="4">
    <location>
        <begin position="210"/>
        <end position="211"/>
    </location>
</feature>
<feature type="non-consecutive residues" evidence="4">
    <location>
        <begin position="221"/>
        <end position="222"/>
    </location>
</feature>
<feature type="non-consecutive residues" evidence="4">
    <location>
        <begin position="238"/>
        <end position="239"/>
    </location>
</feature>
<feature type="non-consecutive residues" evidence="4">
    <location>
        <begin position="248"/>
        <end position="249"/>
    </location>
</feature>
<feature type="non-consecutive residues" evidence="4">
    <location>
        <begin position="256"/>
        <end position="257"/>
    </location>
</feature>
<feature type="non-terminal residue" evidence="4">
    <location>
        <position position="266"/>
    </location>
</feature>
<proteinExistence type="evidence at protein level"/>
<protein>
    <recommendedName>
        <fullName>Respiratory nitrate reductase beta chain</fullName>
        <ecNumber>1.7.5.1</ecNumber>
    </recommendedName>
    <alternativeName>
        <fullName>Respiratory membrane-bound nitrate reductase subunit beta</fullName>
    </alternativeName>
</protein>
<organism>
    <name type="scientific">Bradyrhizobium sp</name>
    <dbReference type="NCBI Taxonomy" id="376"/>
    <lineage>
        <taxon>Bacteria</taxon>
        <taxon>Pseudomonadati</taxon>
        <taxon>Pseudomonadota</taxon>
        <taxon>Alphaproteobacteria</taxon>
        <taxon>Hyphomicrobiales</taxon>
        <taxon>Nitrobacteraceae</taxon>
        <taxon>Bradyrhizobium</taxon>
    </lineage>
</organism>
<gene>
    <name type="primary">narH</name>
</gene>